<accession>Q3ARF1</accession>
<protein>
    <recommendedName>
        <fullName evidence="1">SsrA-binding protein</fullName>
    </recommendedName>
    <alternativeName>
        <fullName evidence="1">Small protein B</fullName>
    </alternativeName>
</protein>
<keyword id="KW-0963">Cytoplasm</keyword>
<keyword id="KW-0694">RNA-binding</keyword>
<name>SSRP_CHLCH</name>
<feature type="chain" id="PRO_0000331030" description="SsrA-binding protein">
    <location>
        <begin position="1"/>
        <end position="157"/>
    </location>
</feature>
<gene>
    <name evidence="1" type="primary">smpB</name>
    <name type="ordered locus">Cag_1162</name>
</gene>
<proteinExistence type="inferred from homology"/>
<reference key="1">
    <citation type="submission" date="2005-08" db="EMBL/GenBank/DDBJ databases">
        <title>Complete sequence of Chlorobium chlorochromatii CaD3.</title>
        <authorList>
            <consortium name="US DOE Joint Genome Institute"/>
            <person name="Copeland A."/>
            <person name="Lucas S."/>
            <person name="Lapidus A."/>
            <person name="Barry K."/>
            <person name="Detter J.C."/>
            <person name="Glavina T."/>
            <person name="Hammon N."/>
            <person name="Israni S."/>
            <person name="Pitluck S."/>
            <person name="Bryant D."/>
            <person name="Schmutz J."/>
            <person name="Larimer F."/>
            <person name="Land M."/>
            <person name="Kyrpides N."/>
            <person name="Ivanova N."/>
            <person name="Richardson P."/>
        </authorList>
    </citation>
    <scope>NUCLEOTIDE SEQUENCE [LARGE SCALE GENOMIC DNA]</scope>
    <source>
        <strain>CaD3</strain>
    </source>
</reference>
<dbReference type="EMBL" id="CP000108">
    <property type="protein sequence ID" value="ABB28424.1"/>
    <property type="molecule type" value="Genomic_DNA"/>
</dbReference>
<dbReference type="SMR" id="Q3ARF1"/>
<dbReference type="STRING" id="340177.Cag_1162"/>
<dbReference type="KEGG" id="cch:Cag_1162"/>
<dbReference type="eggNOG" id="COG0691">
    <property type="taxonomic scope" value="Bacteria"/>
</dbReference>
<dbReference type="HOGENOM" id="CLU_108953_0_1_10"/>
<dbReference type="OrthoDB" id="9805462at2"/>
<dbReference type="GO" id="GO:0005829">
    <property type="term" value="C:cytosol"/>
    <property type="evidence" value="ECO:0007669"/>
    <property type="project" value="TreeGrafter"/>
</dbReference>
<dbReference type="GO" id="GO:0003723">
    <property type="term" value="F:RNA binding"/>
    <property type="evidence" value="ECO:0007669"/>
    <property type="project" value="UniProtKB-UniRule"/>
</dbReference>
<dbReference type="GO" id="GO:0070929">
    <property type="term" value="P:trans-translation"/>
    <property type="evidence" value="ECO:0007669"/>
    <property type="project" value="UniProtKB-UniRule"/>
</dbReference>
<dbReference type="CDD" id="cd09294">
    <property type="entry name" value="SmpB"/>
    <property type="match status" value="1"/>
</dbReference>
<dbReference type="Gene3D" id="2.40.280.10">
    <property type="match status" value="1"/>
</dbReference>
<dbReference type="HAMAP" id="MF_00023">
    <property type="entry name" value="SmpB"/>
    <property type="match status" value="1"/>
</dbReference>
<dbReference type="InterPro" id="IPR023620">
    <property type="entry name" value="SmpB"/>
</dbReference>
<dbReference type="InterPro" id="IPR000037">
    <property type="entry name" value="SsrA-bd_prot"/>
</dbReference>
<dbReference type="InterPro" id="IPR020081">
    <property type="entry name" value="SsrA-bd_prot_CS"/>
</dbReference>
<dbReference type="NCBIfam" id="NF003843">
    <property type="entry name" value="PRK05422.1"/>
    <property type="match status" value="1"/>
</dbReference>
<dbReference type="NCBIfam" id="TIGR00086">
    <property type="entry name" value="smpB"/>
    <property type="match status" value="1"/>
</dbReference>
<dbReference type="PANTHER" id="PTHR30308:SF2">
    <property type="entry name" value="SSRA-BINDING PROTEIN"/>
    <property type="match status" value="1"/>
</dbReference>
<dbReference type="PANTHER" id="PTHR30308">
    <property type="entry name" value="TMRNA-BINDING COMPONENT OF TRANS-TRANSLATION TAGGING COMPLEX"/>
    <property type="match status" value="1"/>
</dbReference>
<dbReference type="Pfam" id="PF01668">
    <property type="entry name" value="SmpB"/>
    <property type="match status" value="1"/>
</dbReference>
<dbReference type="SUPFAM" id="SSF74982">
    <property type="entry name" value="Small protein B (SmpB)"/>
    <property type="match status" value="1"/>
</dbReference>
<dbReference type="PROSITE" id="PS01317">
    <property type="entry name" value="SSRP"/>
    <property type="match status" value="1"/>
</dbReference>
<evidence type="ECO:0000255" key="1">
    <source>
        <dbReference type="HAMAP-Rule" id="MF_00023"/>
    </source>
</evidence>
<sequence length="157" mass="18301">MSKQPQQRYAEAIVNRKARHEFEIIETFVAGIQLAGSEVKSVRLGQASLNESFAIILRNEVWLENMQITPYKHNRMEVLEAKRSRKLLLHKKEIAKLQAKVSEKGLTLVPLKAFFTPHGLLKIELAIARGKKLYDKRETLKNRENQRHLDQLRKQYS</sequence>
<organism>
    <name type="scientific">Chlorobium chlorochromatii (strain CaD3)</name>
    <dbReference type="NCBI Taxonomy" id="340177"/>
    <lineage>
        <taxon>Bacteria</taxon>
        <taxon>Pseudomonadati</taxon>
        <taxon>Chlorobiota</taxon>
        <taxon>Chlorobiia</taxon>
        <taxon>Chlorobiales</taxon>
        <taxon>Chlorobiaceae</taxon>
        <taxon>Chlorobium/Pelodictyon group</taxon>
        <taxon>Chlorobium</taxon>
    </lineage>
</organism>
<comment type="function">
    <text evidence="1">Required for rescue of stalled ribosomes mediated by trans-translation. Binds to transfer-messenger RNA (tmRNA), required for stable association of tmRNA with ribosomes. tmRNA and SmpB together mimic tRNA shape, replacing the anticodon stem-loop with SmpB. tmRNA is encoded by the ssrA gene; the 2 termini fold to resemble tRNA(Ala) and it encodes a 'tag peptide', a short internal open reading frame. During trans-translation Ala-aminoacylated tmRNA acts like a tRNA, entering the A-site of stalled ribosomes, displacing the stalled mRNA. The ribosome then switches to translate the ORF on the tmRNA; the nascent peptide is terminated with the 'tag peptide' encoded by the tmRNA and targeted for degradation. The ribosome is freed to recommence translation, which seems to be the essential function of trans-translation.</text>
</comment>
<comment type="subcellular location">
    <subcellularLocation>
        <location evidence="1">Cytoplasm</location>
    </subcellularLocation>
    <text evidence="1">The tmRNA-SmpB complex associates with stalled 70S ribosomes.</text>
</comment>
<comment type="similarity">
    <text evidence="1">Belongs to the SmpB family.</text>
</comment>